<keyword id="KW-0012">Acyltransferase</keyword>
<keyword id="KW-0133">Cell shape</keyword>
<keyword id="KW-0961">Cell wall biogenesis/degradation</keyword>
<keyword id="KW-0963">Cytoplasm</keyword>
<keyword id="KW-0460">Magnesium</keyword>
<keyword id="KW-0479">Metal-binding</keyword>
<keyword id="KW-0511">Multifunctional enzyme</keyword>
<keyword id="KW-0548">Nucleotidyltransferase</keyword>
<keyword id="KW-0573">Peptidoglycan synthesis</keyword>
<keyword id="KW-1185">Reference proteome</keyword>
<keyword id="KW-0677">Repeat</keyword>
<keyword id="KW-0808">Transferase</keyword>
<reference key="1">
    <citation type="journal article" date="2006" name="J. Bacteriol.">
        <title>Complete genome sequence of the dehalorespiring bacterium Desulfitobacterium hafniense Y51 and comparison with Dehalococcoides ethenogenes 195.</title>
        <authorList>
            <person name="Nonaka H."/>
            <person name="Keresztes G."/>
            <person name="Shinoda Y."/>
            <person name="Ikenaga Y."/>
            <person name="Abe M."/>
            <person name="Naito K."/>
            <person name="Inatomi K."/>
            <person name="Furukawa K."/>
            <person name="Inui M."/>
            <person name="Yukawa H."/>
        </authorList>
    </citation>
    <scope>NUCLEOTIDE SEQUENCE [LARGE SCALE GENOMIC DNA]</scope>
    <source>
        <strain>Y51</strain>
    </source>
</reference>
<protein>
    <recommendedName>
        <fullName evidence="1">Bifunctional protein GlmU</fullName>
    </recommendedName>
    <domain>
        <recommendedName>
            <fullName evidence="1">UDP-N-acetylglucosamine pyrophosphorylase</fullName>
            <ecNumber evidence="1">2.7.7.23</ecNumber>
        </recommendedName>
        <alternativeName>
            <fullName evidence="1">N-acetylglucosamine-1-phosphate uridyltransferase</fullName>
        </alternativeName>
    </domain>
    <domain>
        <recommendedName>
            <fullName evidence="1">Glucosamine-1-phosphate N-acetyltransferase</fullName>
            <ecNumber evidence="1">2.3.1.157</ecNumber>
        </recommendedName>
    </domain>
</protein>
<name>GLMU_DESHY</name>
<feature type="chain" id="PRO_0000263127" description="Bifunctional protein GlmU">
    <location>
        <begin position="1"/>
        <end position="453"/>
    </location>
</feature>
<feature type="region of interest" description="Pyrophosphorylase" evidence="1">
    <location>
        <begin position="1"/>
        <end position="228"/>
    </location>
</feature>
<feature type="region of interest" description="Linker" evidence="1">
    <location>
        <begin position="229"/>
        <end position="249"/>
    </location>
</feature>
<feature type="region of interest" description="N-acetyltransferase" evidence="1">
    <location>
        <begin position="250"/>
        <end position="453"/>
    </location>
</feature>
<feature type="active site" description="Proton acceptor" evidence="1">
    <location>
        <position position="361"/>
    </location>
</feature>
<feature type="binding site" evidence="1">
    <location>
        <position position="23"/>
    </location>
    <ligand>
        <name>UDP-N-acetyl-alpha-D-glucosamine</name>
        <dbReference type="ChEBI" id="CHEBI:57705"/>
    </ligand>
</feature>
<feature type="binding site" evidence="1">
    <location>
        <position position="73"/>
    </location>
    <ligand>
        <name>UDP-N-acetyl-alpha-D-glucosamine</name>
        <dbReference type="ChEBI" id="CHEBI:57705"/>
    </ligand>
</feature>
<feature type="binding site" evidence="1">
    <location>
        <begin position="78"/>
        <end position="79"/>
    </location>
    <ligand>
        <name>UDP-N-acetyl-alpha-D-glucosamine</name>
        <dbReference type="ChEBI" id="CHEBI:57705"/>
    </ligand>
</feature>
<feature type="binding site" evidence="1">
    <location>
        <begin position="100"/>
        <end position="102"/>
    </location>
    <ligand>
        <name>UDP-N-acetyl-alpha-D-glucosamine</name>
        <dbReference type="ChEBI" id="CHEBI:57705"/>
    </ligand>
</feature>
<feature type="binding site" evidence="1">
    <location>
        <position position="102"/>
    </location>
    <ligand>
        <name>Mg(2+)</name>
        <dbReference type="ChEBI" id="CHEBI:18420"/>
    </ligand>
</feature>
<feature type="binding site" evidence="1">
    <location>
        <position position="139"/>
    </location>
    <ligand>
        <name>UDP-N-acetyl-alpha-D-glucosamine</name>
        <dbReference type="ChEBI" id="CHEBI:57705"/>
    </ligand>
</feature>
<feature type="binding site" evidence="1">
    <location>
        <position position="153"/>
    </location>
    <ligand>
        <name>UDP-N-acetyl-alpha-D-glucosamine</name>
        <dbReference type="ChEBI" id="CHEBI:57705"/>
    </ligand>
</feature>
<feature type="binding site" evidence="1">
    <location>
        <position position="168"/>
    </location>
    <ligand>
        <name>UDP-N-acetyl-alpha-D-glucosamine</name>
        <dbReference type="ChEBI" id="CHEBI:57705"/>
    </ligand>
</feature>
<feature type="binding site" evidence="1">
    <location>
        <position position="226"/>
    </location>
    <ligand>
        <name>Mg(2+)</name>
        <dbReference type="ChEBI" id="CHEBI:18420"/>
    </ligand>
</feature>
<feature type="binding site" evidence="1">
    <location>
        <position position="226"/>
    </location>
    <ligand>
        <name>UDP-N-acetyl-alpha-D-glucosamine</name>
        <dbReference type="ChEBI" id="CHEBI:57705"/>
    </ligand>
</feature>
<feature type="binding site" evidence="1">
    <location>
        <position position="331"/>
    </location>
    <ligand>
        <name>UDP-N-acetyl-alpha-D-glucosamine</name>
        <dbReference type="ChEBI" id="CHEBI:57705"/>
    </ligand>
</feature>
<feature type="binding site" evidence="1">
    <location>
        <position position="349"/>
    </location>
    <ligand>
        <name>UDP-N-acetyl-alpha-D-glucosamine</name>
        <dbReference type="ChEBI" id="CHEBI:57705"/>
    </ligand>
</feature>
<feature type="binding site" evidence="1">
    <location>
        <position position="364"/>
    </location>
    <ligand>
        <name>UDP-N-acetyl-alpha-D-glucosamine</name>
        <dbReference type="ChEBI" id="CHEBI:57705"/>
    </ligand>
</feature>
<feature type="binding site" evidence="1">
    <location>
        <position position="375"/>
    </location>
    <ligand>
        <name>UDP-N-acetyl-alpha-D-glucosamine</name>
        <dbReference type="ChEBI" id="CHEBI:57705"/>
    </ligand>
</feature>
<feature type="binding site" evidence="1">
    <location>
        <position position="378"/>
    </location>
    <ligand>
        <name>acetyl-CoA</name>
        <dbReference type="ChEBI" id="CHEBI:57288"/>
    </ligand>
</feature>
<feature type="binding site" evidence="1">
    <location>
        <begin position="384"/>
        <end position="385"/>
    </location>
    <ligand>
        <name>acetyl-CoA</name>
        <dbReference type="ChEBI" id="CHEBI:57288"/>
    </ligand>
</feature>
<feature type="binding site" evidence="1">
    <location>
        <position position="403"/>
    </location>
    <ligand>
        <name>acetyl-CoA</name>
        <dbReference type="ChEBI" id="CHEBI:57288"/>
    </ligand>
</feature>
<feature type="binding site" evidence="1">
    <location>
        <position position="421"/>
    </location>
    <ligand>
        <name>acetyl-CoA</name>
        <dbReference type="ChEBI" id="CHEBI:57288"/>
    </ligand>
</feature>
<feature type="binding site" evidence="1">
    <location>
        <position position="438"/>
    </location>
    <ligand>
        <name>acetyl-CoA</name>
        <dbReference type="ChEBI" id="CHEBI:57288"/>
    </ligand>
</feature>
<comment type="function">
    <text evidence="1">Catalyzes the last two sequential reactions in the de novo biosynthetic pathway for UDP-N-acetylglucosamine (UDP-GlcNAc). The C-terminal domain catalyzes the transfer of acetyl group from acetyl coenzyme A to glucosamine-1-phosphate (GlcN-1-P) to produce N-acetylglucosamine-1-phosphate (GlcNAc-1-P), which is converted into UDP-GlcNAc by the transfer of uridine 5-monophosphate (from uridine 5-triphosphate), a reaction catalyzed by the N-terminal domain.</text>
</comment>
<comment type="catalytic activity">
    <reaction evidence="1">
        <text>alpha-D-glucosamine 1-phosphate + acetyl-CoA = N-acetyl-alpha-D-glucosamine 1-phosphate + CoA + H(+)</text>
        <dbReference type="Rhea" id="RHEA:13725"/>
        <dbReference type="ChEBI" id="CHEBI:15378"/>
        <dbReference type="ChEBI" id="CHEBI:57287"/>
        <dbReference type="ChEBI" id="CHEBI:57288"/>
        <dbReference type="ChEBI" id="CHEBI:57776"/>
        <dbReference type="ChEBI" id="CHEBI:58516"/>
        <dbReference type="EC" id="2.3.1.157"/>
    </reaction>
</comment>
<comment type="catalytic activity">
    <reaction evidence="1">
        <text>N-acetyl-alpha-D-glucosamine 1-phosphate + UTP + H(+) = UDP-N-acetyl-alpha-D-glucosamine + diphosphate</text>
        <dbReference type="Rhea" id="RHEA:13509"/>
        <dbReference type="ChEBI" id="CHEBI:15378"/>
        <dbReference type="ChEBI" id="CHEBI:33019"/>
        <dbReference type="ChEBI" id="CHEBI:46398"/>
        <dbReference type="ChEBI" id="CHEBI:57705"/>
        <dbReference type="ChEBI" id="CHEBI:57776"/>
        <dbReference type="EC" id="2.7.7.23"/>
    </reaction>
</comment>
<comment type="cofactor">
    <cofactor evidence="1">
        <name>Mg(2+)</name>
        <dbReference type="ChEBI" id="CHEBI:18420"/>
    </cofactor>
    <text evidence="1">Binds 1 Mg(2+) ion per subunit.</text>
</comment>
<comment type="pathway">
    <text evidence="1">Nucleotide-sugar biosynthesis; UDP-N-acetyl-alpha-D-glucosamine biosynthesis; N-acetyl-alpha-D-glucosamine 1-phosphate from alpha-D-glucosamine 6-phosphate (route II): step 2/2.</text>
</comment>
<comment type="pathway">
    <text evidence="1">Nucleotide-sugar biosynthesis; UDP-N-acetyl-alpha-D-glucosamine biosynthesis; UDP-N-acetyl-alpha-D-glucosamine from N-acetyl-alpha-D-glucosamine 1-phosphate: step 1/1.</text>
</comment>
<comment type="pathway">
    <text evidence="1">Bacterial outer membrane biogenesis; LPS lipid A biosynthesis.</text>
</comment>
<comment type="subunit">
    <text evidence="1">Homotrimer.</text>
</comment>
<comment type="subcellular location">
    <subcellularLocation>
        <location evidence="1">Cytoplasm</location>
    </subcellularLocation>
</comment>
<comment type="similarity">
    <text evidence="1">In the N-terminal section; belongs to the N-acetylglucosamine-1-phosphate uridyltransferase family.</text>
</comment>
<comment type="similarity">
    <text evidence="1">In the C-terminal section; belongs to the transferase hexapeptide repeat family.</text>
</comment>
<gene>
    <name evidence="1" type="primary">glmU</name>
    <name type="ordered locus">DSY0152</name>
</gene>
<sequence length="453" mass="49434">MPHWAAVIMAAGKGTRMKSKLPKVMHTLAGKPMLQHVLDCVRSVEIPRSMVVLGHGREQIEATLDDRTEVVVQEEQCGTGHAIMQAIPHCHEVDHIIVLSGDQPLIRPETLRNLIRIHIEHNAAATLLTACFENPHGLGRILKEGDQFLRVVEEKDATPEERLVQEINTGTYCFNVAKLREALKNITPKNAQGEYYLTDVFAVFHAQGEVIRTYCTEDVHEALGINSRAQLAAAEDVARQRILSYWMEEGVTIIDPRSTFIEAGVVLQPDVVLQPFTILKGRTQVAEDAVIGPHTTLTDCTVGAGSEVSHTVGNQAVIGGHCTIGPYAYLRPGTVLQDKVKVGDFVEIKNSQIGEGSKIPHLSYVGDSQVGKSVNIGAGTITCNYDGVNKYKTIIRDKAFLGSNTNLVAPVEIGEGSVTGAGSTISKNVPANTLAIERSTQKHIENWVRNKKK</sequence>
<dbReference type="EC" id="2.7.7.23" evidence="1"/>
<dbReference type="EC" id="2.3.1.157" evidence="1"/>
<dbReference type="EMBL" id="AP008230">
    <property type="protein sequence ID" value="BAE81941.1"/>
    <property type="molecule type" value="Genomic_DNA"/>
</dbReference>
<dbReference type="RefSeq" id="WP_011458919.1">
    <property type="nucleotide sequence ID" value="NC_007907.1"/>
</dbReference>
<dbReference type="SMR" id="Q251V1"/>
<dbReference type="STRING" id="138119.DSY0152"/>
<dbReference type="KEGG" id="dsy:DSY0152"/>
<dbReference type="eggNOG" id="COG1207">
    <property type="taxonomic scope" value="Bacteria"/>
</dbReference>
<dbReference type="HOGENOM" id="CLU_029499_15_2_9"/>
<dbReference type="UniPathway" id="UPA00113">
    <property type="reaction ID" value="UER00532"/>
</dbReference>
<dbReference type="UniPathway" id="UPA00113">
    <property type="reaction ID" value="UER00533"/>
</dbReference>
<dbReference type="UniPathway" id="UPA00973"/>
<dbReference type="Proteomes" id="UP000001946">
    <property type="component" value="Chromosome"/>
</dbReference>
<dbReference type="GO" id="GO:0005737">
    <property type="term" value="C:cytoplasm"/>
    <property type="evidence" value="ECO:0007669"/>
    <property type="project" value="UniProtKB-SubCell"/>
</dbReference>
<dbReference type="GO" id="GO:0016020">
    <property type="term" value="C:membrane"/>
    <property type="evidence" value="ECO:0007669"/>
    <property type="project" value="GOC"/>
</dbReference>
<dbReference type="GO" id="GO:0019134">
    <property type="term" value="F:glucosamine-1-phosphate N-acetyltransferase activity"/>
    <property type="evidence" value="ECO:0007669"/>
    <property type="project" value="UniProtKB-UniRule"/>
</dbReference>
<dbReference type="GO" id="GO:0000287">
    <property type="term" value="F:magnesium ion binding"/>
    <property type="evidence" value="ECO:0007669"/>
    <property type="project" value="UniProtKB-UniRule"/>
</dbReference>
<dbReference type="GO" id="GO:0003977">
    <property type="term" value="F:UDP-N-acetylglucosamine diphosphorylase activity"/>
    <property type="evidence" value="ECO:0007669"/>
    <property type="project" value="UniProtKB-UniRule"/>
</dbReference>
<dbReference type="GO" id="GO:0000902">
    <property type="term" value="P:cell morphogenesis"/>
    <property type="evidence" value="ECO:0007669"/>
    <property type="project" value="UniProtKB-UniRule"/>
</dbReference>
<dbReference type="GO" id="GO:0071555">
    <property type="term" value="P:cell wall organization"/>
    <property type="evidence" value="ECO:0007669"/>
    <property type="project" value="UniProtKB-KW"/>
</dbReference>
<dbReference type="GO" id="GO:0009245">
    <property type="term" value="P:lipid A biosynthetic process"/>
    <property type="evidence" value="ECO:0007669"/>
    <property type="project" value="UniProtKB-UniRule"/>
</dbReference>
<dbReference type="GO" id="GO:0009252">
    <property type="term" value="P:peptidoglycan biosynthetic process"/>
    <property type="evidence" value="ECO:0007669"/>
    <property type="project" value="UniProtKB-UniRule"/>
</dbReference>
<dbReference type="GO" id="GO:0008360">
    <property type="term" value="P:regulation of cell shape"/>
    <property type="evidence" value="ECO:0007669"/>
    <property type="project" value="UniProtKB-KW"/>
</dbReference>
<dbReference type="GO" id="GO:0006048">
    <property type="term" value="P:UDP-N-acetylglucosamine biosynthetic process"/>
    <property type="evidence" value="ECO:0007669"/>
    <property type="project" value="UniProtKB-UniPathway"/>
</dbReference>
<dbReference type="CDD" id="cd02540">
    <property type="entry name" value="GT2_GlmU_N_bac"/>
    <property type="match status" value="1"/>
</dbReference>
<dbReference type="CDD" id="cd03353">
    <property type="entry name" value="LbH_GlmU_C"/>
    <property type="match status" value="1"/>
</dbReference>
<dbReference type="Gene3D" id="2.160.10.10">
    <property type="entry name" value="Hexapeptide repeat proteins"/>
    <property type="match status" value="1"/>
</dbReference>
<dbReference type="Gene3D" id="3.90.550.10">
    <property type="entry name" value="Spore Coat Polysaccharide Biosynthesis Protein SpsA, Chain A"/>
    <property type="match status" value="1"/>
</dbReference>
<dbReference type="HAMAP" id="MF_01631">
    <property type="entry name" value="GlmU"/>
    <property type="match status" value="1"/>
</dbReference>
<dbReference type="InterPro" id="IPR005882">
    <property type="entry name" value="Bifunctional_GlmU"/>
</dbReference>
<dbReference type="InterPro" id="IPR050065">
    <property type="entry name" value="GlmU-like"/>
</dbReference>
<dbReference type="InterPro" id="IPR038009">
    <property type="entry name" value="GlmU_C_LbH"/>
</dbReference>
<dbReference type="InterPro" id="IPR001451">
    <property type="entry name" value="Hexapep"/>
</dbReference>
<dbReference type="InterPro" id="IPR025877">
    <property type="entry name" value="MobA-like_NTP_Trfase"/>
</dbReference>
<dbReference type="InterPro" id="IPR029044">
    <property type="entry name" value="Nucleotide-diphossugar_trans"/>
</dbReference>
<dbReference type="InterPro" id="IPR011004">
    <property type="entry name" value="Trimer_LpxA-like_sf"/>
</dbReference>
<dbReference type="NCBIfam" id="TIGR01173">
    <property type="entry name" value="glmU"/>
    <property type="match status" value="1"/>
</dbReference>
<dbReference type="NCBIfam" id="NF010934">
    <property type="entry name" value="PRK14354.1"/>
    <property type="match status" value="1"/>
</dbReference>
<dbReference type="PANTHER" id="PTHR43584:SF3">
    <property type="entry name" value="BIFUNCTIONAL PROTEIN GLMU"/>
    <property type="match status" value="1"/>
</dbReference>
<dbReference type="PANTHER" id="PTHR43584">
    <property type="entry name" value="NUCLEOTIDYL TRANSFERASE"/>
    <property type="match status" value="1"/>
</dbReference>
<dbReference type="Pfam" id="PF14602">
    <property type="entry name" value="Hexapep_2"/>
    <property type="match status" value="1"/>
</dbReference>
<dbReference type="Pfam" id="PF12804">
    <property type="entry name" value="NTP_transf_3"/>
    <property type="match status" value="1"/>
</dbReference>
<dbReference type="SUPFAM" id="SSF53448">
    <property type="entry name" value="Nucleotide-diphospho-sugar transferases"/>
    <property type="match status" value="1"/>
</dbReference>
<dbReference type="SUPFAM" id="SSF51161">
    <property type="entry name" value="Trimeric LpxA-like enzymes"/>
    <property type="match status" value="1"/>
</dbReference>
<proteinExistence type="inferred from homology"/>
<organism>
    <name type="scientific">Desulfitobacterium hafniense (strain Y51)</name>
    <dbReference type="NCBI Taxonomy" id="138119"/>
    <lineage>
        <taxon>Bacteria</taxon>
        <taxon>Bacillati</taxon>
        <taxon>Bacillota</taxon>
        <taxon>Clostridia</taxon>
        <taxon>Eubacteriales</taxon>
        <taxon>Desulfitobacteriaceae</taxon>
        <taxon>Desulfitobacterium</taxon>
    </lineage>
</organism>
<evidence type="ECO:0000255" key="1">
    <source>
        <dbReference type="HAMAP-Rule" id="MF_01631"/>
    </source>
</evidence>
<accession>Q251V1</accession>